<reference key="1">
    <citation type="journal article" date="2009" name="PLoS Genet.">
        <title>Organised genome dynamics in the Escherichia coli species results in highly diverse adaptive paths.</title>
        <authorList>
            <person name="Touchon M."/>
            <person name="Hoede C."/>
            <person name="Tenaillon O."/>
            <person name="Barbe V."/>
            <person name="Baeriswyl S."/>
            <person name="Bidet P."/>
            <person name="Bingen E."/>
            <person name="Bonacorsi S."/>
            <person name="Bouchier C."/>
            <person name="Bouvet O."/>
            <person name="Calteau A."/>
            <person name="Chiapello H."/>
            <person name="Clermont O."/>
            <person name="Cruveiller S."/>
            <person name="Danchin A."/>
            <person name="Diard M."/>
            <person name="Dossat C."/>
            <person name="Karoui M.E."/>
            <person name="Frapy E."/>
            <person name="Garry L."/>
            <person name="Ghigo J.M."/>
            <person name="Gilles A.M."/>
            <person name="Johnson J."/>
            <person name="Le Bouguenec C."/>
            <person name="Lescat M."/>
            <person name="Mangenot S."/>
            <person name="Martinez-Jehanne V."/>
            <person name="Matic I."/>
            <person name="Nassif X."/>
            <person name="Oztas S."/>
            <person name="Petit M.A."/>
            <person name="Pichon C."/>
            <person name="Rouy Z."/>
            <person name="Ruf C.S."/>
            <person name="Schneider D."/>
            <person name="Tourret J."/>
            <person name="Vacherie B."/>
            <person name="Vallenet D."/>
            <person name="Medigue C."/>
            <person name="Rocha E.P.C."/>
            <person name="Denamur E."/>
        </authorList>
    </citation>
    <scope>NUCLEOTIDE SEQUENCE [LARGE SCALE GENOMIC DNA]</scope>
    <source>
        <strain>55989 / EAEC</strain>
    </source>
</reference>
<name>SYH_ECO55</name>
<proteinExistence type="inferred from homology"/>
<comment type="catalytic activity">
    <reaction evidence="1">
        <text>tRNA(His) + L-histidine + ATP = L-histidyl-tRNA(His) + AMP + diphosphate + H(+)</text>
        <dbReference type="Rhea" id="RHEA:17313"/>
        <dbReference type="Rhea" id="RHEA-COMP:9665"/>
        <dbReference type="Rhea" id="RHEA-COMP:9689"/>
        <dbReference type="ChEBI" id="CHEBI:15378"/>
        <dbReference type="ChEBI" id="CHEBI:30616"/>
        <dbReference type="ChEBI" id="CHEBI:33019"/>
        <dbReference type="ChEBI" id="CHEBI:57595"/>
        <dbReference type="ChEBI" id="CHEBI:78442"/>
        <dbReference type="ChEBI" id="CHEBI:78527"/>
        <dbReference type="ChEBI" id="CHEBI:456215"/>
        <dbReference type="EC" id="6.1.1.21"/>
    </reaction>
</comment>
<comment type="subunit">
    <text evidence="1">Homodimer.</text>
</comment>
<comment type="subcellular location">
    <subcellularLocation>
        <location evidence="1">Cytoplasm</location>
    </subcellularLocation>
</comment>
<comment type="similarity">
    <text evidence="1">Belongs to the class-II aminoacyl-tRNA synthetase family.</text>
</comment>
<evidence type="ECO:0000255" key="1">
    <source>
        <dbReference type="HAMAP-Rule" id="MF_00127"/>
    </source>
</evidence>
<feature type="chain" id="PRO_1000199129" description="Histidine--tRNA ligase">
    <location>
        <begin position="1"/>
        <end position="424"/>
    </location>
</feature>
<organism>
    <name type="scientific">Escherichia coli (strain 55989 / EAEC)</name>
    <dbReference type="NCBI Taxonomy" id="585055"/>
    <lineage>
        <taxon>Bacteria</taxon>
        <taxon>Pseudomonadati</taxon>
        <taxon>Pseudomonadota</taxon>
        <taxon>Gammaproteobacteria</taxon>
        <taxon>Enterobacterales</taxon>
        <taxon>Enterobacteriaceae</taxon>
        <taxon>Escherichia</taxon>
    </lineage>
</organism>
<sequence length="424" mass="47059">MAKNIQAIRGMNDYLPGETAIWQRIEGTLKNVLGSYGYSEIRLPIVEQTPLFKRAIGEVTDVVEKEMYTFEDRNGDSLTLRPEGTAGCVRAGIEHGLLYNQEQRLWYIGPMFRHERPQKGRYRQFHQLGCEVFGLQGPDIDAELIMLTARWWRALGISEHVTLELNSIGSLEARANYRDALVAFLEQHKEKLDEDCKRRMYTNPLRVLDSKNPEVQALLNDAPALGDYLDEESREHFAGLCKLLESAGIAYTVNQRLVRGLDYYNRTVFEWVTNSLGSQGTVCAGGRYDGLVEQLGGRATPAVGFAMGLERLVLLVQAVNPEFKADPVVDIYLVASGADTQSAAMALAERLRDELPGVKLMTNHGGGNFKKQFTRADKWGARVAVVLGESEVANGTAVVKDLRSGEQTAVAQDSVAAHLRTLLG</sequence>
<accession>B7LCQ4</accession>
<gene>
    <name evidence="1" type="primary">hisS</name>
    <name type="ordered locus">EC55989_2799</name>
</gene>
<dbReference type="EC" id="6.1.1.21" evidence="1"/>
<dbReference type="EMBL" id="CU928145">
    <property type="protein sequence ID" value="CAU98672.1"/>
    <property type="molecule type" value="Genomic_DNA"/>
</dbReference>
<dbReference type="RefSeq" id="WP_001107169.1">
    <property type="nucleotide sequence ID" value="NC_011748.1"/>
</dbReference>
<dbReference type="SMR" id="B7LCQ4"/>
<dbReference type="KEGG" id="eck:EC55989_2799"/>
<dbReference type="HOGENOM" id="CLU_025113_1_1_6"/>
<dbReference type="Proteomes" id="UP000000746">
    <property type="component" value="Chromosome"/>
</dbReference>
<dbReference type="GO" id="GO:0005737">
    <property type="term" value="C:cytoplasm"/>
    <property type="evidence" value="ECO:0007669"/>
    <property type="project" value="UniProtKB-SubCell"/>
</dbReference>
<dbReference type="GO" id="GO:0005524">
    <property type="term" value="F:ATP binding"/>
    <property type="evidence" value="ECO:0007669"/>
    <property type="project" value="UniProtKB-UniRule"/>
</dbReference>
<dbReference type="GO" id="GO:0004821">
    <property type="term" value="F:histidine-tRNA ligase activity"/>
    <property type="evidence" value="ECO:0007669"/>
    <property type="project" value="UniProtKB-UniRule"/>
</dbReference>
<dbReference type="GO" id="GO:0006427">
    <property type="term" value="P:histidyl-tRNA aminoacylation"/>
    <property type="evidence" value="ECO:0007669"/>
    <property type="project" value="UniProtKB-UniRule"/>
</dbReference>
<dbReference type="CDD" id="cd00773">
    <property type="entry name" value="HisRS-like_core"/>
    <property type="match status" value="1"/>
</dbReference>
<dbReference type="CDD" id="cd00859">
    <property type="entry name" value="HisRS_anticodon"/>
    <property type="match status" value="1"/>
</dbReference>
<dbReference type="FunFam" id="3.30.930.10:FF:000005">
    <property type="entry name" value="Histidine--tRNA ligase"/>
    <property type="match status" value="1"/>
</dbReference>
<dbReference type="FunFam" id="3.40.50.800:FF:000007">
    <property type="entry name" value="Histidine--tRNA ligase"/>
    <property type="match status" value="1"/>
</dbReference>
<dbReference type="Gene3D" id="3.40.50.800">
    <property type="entry name" value="Anticodon-binding domain"/>
    <property type="match status" value="1"/>
</dbReference>
<dbReference type="Gene3D" id="3.30.930.10">
    <property type="entry name" value="Bira Bifunctional Protein, Domain 2"/>
    <property type="match status" value="1"/>
</dbReference>
<dbReference type="HAMAP" id="MF_00127">
    <property type="entry name" value="His_tRNA_synth"/>
    <property type="match status" value="1"/>
</dbReference>
<dbReference type="InterPro" id="IPR006195">
    <property type="entry name" value="aa-tRNA-synth_II"/>
</dbReference>
<dbReference type="InterPro" id="IPR045864">
    <property type="entry name" value="aa-tRNA-synth_II/BPL/LPL"/>
</dbReference>
<dbReference type="InterPro" id="IPR004154">
    <property type="entry name" value="Anticodon-bd"/>
</dbReference>
<dbReference type="InterPro" id="IPR036621">
    <property type="entry name" value="Anticodon-bd_dom_sf"/>
</dbReference>
<dbReference type="InterPro" id="IPR015807">
    <property type="entry name" value="His-tRNA-ligase"/>
</dbReference>
<dbReference type="InterPro" id="IPR041715">
    <property type="entry name" value="HisRS-like_core"/>
</dbReference>
<dbReference type="InterPro" id="IPR004516">
    <property type="entry name" value="HisRS/HisZ"/>
</dbReference>
<dbReference type="InterPro" id="IPR033656">
    <property type="entry name" value="HisRS_anticodon"/>
</dbReference>
<dbReference type="NCBIfam" id="TIGR00442">
    <property type="entry name" value="hisS"/>
    <property type="match status" value="1"/>
</dbReference>
<dbReference type="PANTHER" id="PTHR43707:SF1">
    <property type="entry name" value="HISTIDINE--TRNA LIGASE, MITOCHONDRIAL-RELATED"/>
    <property type="match status" value="1"/>
</dbReference>
<dbReference type="PANTHER" id="PTHR43707">
    <property type="entry name" value="HISTIDYL-TRNA SYNTHETASE"/>
    <property type="match status" value="1"/>
</dbReference>
<dbReference type="Pfam" id="PF03129">
    <property type="entry name" value="HGTP_anticodon"/>
    <property type="match status" value="1"/>
</dbReference>
<dbReference type="Pfam" id="PF13393">
    <property type="entry name" value="tRNA-synt_His"/>
    <property type="match status" value="1"/>
</dbReference>
<dbReference type="PIRSF" id="PIRSF001549">
    <property type="entry name" value="His-tRNA_synth"/>
    <property type="match status" value="1"/>
</dbReference>
<dbReference type="SUPFAM" id="SSF52954">
    <property type="entry name" value="Class II aaRS ABD-related"/>
    <property type="match status" value="1"/>
</dbReference>
<dbReference type="SUPFAM" id="SSF55681">
    <property type="entry name" value="Class II aaRS and biotin synthetases"/>
    <property type="match status" value="1"/>
</dbReference>
<dbReference type="PROSITE" id="PS50862">
    <property type="entry name" value="AA_TRNA_LIGASE_II"/>
    <property type="match status" value="1"/>
</dbReference>
<keyword id="KW-0030">Aminoacyl-tRNA synthetase</keyword>
<keyword id="KW-0067">ATP-binding</keyword>
<keyword id="KW-0963">Cytoplasm</keyword>
<keyword id="KW-0436">Ligase</keyword>
<keyword id="KW-0547">Nucleotide-binding</keyword>
<keyword id="KW-0648">Protein biosynthesis</keyword>
<keyword id="KW-1185">Reference proteome</keyword>
<protein>
    <recommendedName>
        <fullName evidence="1">Histidine--tRNA ligase</fullName>
        <ecNumber evidence="1">6.1.1.21</ecNumber>
    </recommendedName>
    <alternativeName>
        <fullName evidence="1">Histidyl-tRNA synthetase</fullName>
        <shortName evidence="1">HisRS</shortName>
    </alternativeName>
</protein>